<reference key="1">
    <citation type="submission" date="2008-12" db="EMBL/GenBank/DDBJ databases">
        <title>NISC comparative sequencing initiative.</title>
        <authorList>
            <person name="Antonellis A."/>
            <person name="Ayele K."/>
            <person name="Benjamin B."/>
            <person name="Blakesley R.W."/>
            <person name="Boakye A."/>
            <person name="Bouffard G.G."/>
            <person name="Brinkley C."/>
            <person name="Brooks S."/>
            <person name="Chu G."/>
            <person name="Coleman H."/>
            <person name="Engle J."/>
            <person name="Gestole M."/>
            <person name="Greene A."/>
            <person name="Guan X."/>
            <person name="Gupta J."/>
            <person name="Haghighi P."/>
            <person name="Han J."/>
            <person name="Hansen N."/>
            <person name="Ho S.-L."/>
            <person name="Hu P."/>
            <person name="Hunter G."/>
            <person name="Hurle B."/>
            <person name="Idol J.R."/>
            <person name="Kwong P."/>
            <person name="Laric P."/>
            <person name="Larson S."/>
            <person name="Lee-Lin S.-Q."/>
            <person name="Legaspi R."/>
            <person name="Madden M."/>
            <person name="Maduro Q.L."/>
            <person name="Maduro V.B."/>
            <person name="Margulies E.H."/>
            <person name="Masiello C."/>
            <person name="Maskeri B."/>
            <person name="McDowell J."/>
            <person name="Mojidi H.A."/>
            <person name="Mullikin J.C."/>
            <person name="Oestreicher J.S."/>
            <person name="Park M."/>
            <person name="Portnoy M.E."/>
            <person name="Prasad A."/>
            <person name="Puri O."/>
            <person name="Reddix-Dugue N."/>
            <person name="Schandler K."/>
            <person name="Schueler M.G."/>
            <person name="Sison C."/>
            <person name="Stantripop S."/>
            <person name="Stephen E."/>
            <person name="Taye A."/>
            <person name="Thomas J.W."/>
            <person name="Thomas P.J."/>
            <person name="Tsipouri V."/>
            <person name="Ung L."/>
            <person name="Vogt J.L."/>
            <person name="Wetherby K.D."/>
            <person name="Young A."/>
            <person name="Green E.D."/>
        </authorList>
    </citation>
    <scope>NUCLEOTIDE SEQUENCE [LARGE SCALE GENOMIC DNA]</scope>
</reference>
<organism>
    <name type="scientific">Oryctolagus cuniculus</name>
    <name type="common">Rabbit</name>
    <dbReference type="NCBI Taxonomy" id="9986"/>
    <lineage>
        <taxon>Eukaryota</taxon>
        <taxon>Metazoa</taxon>
        <taxon>Chordata</taxon>
        <taxon>Craniata</taxon>
        <taxon>Vertebrata</taxon>
        <taxon>Euteleostomi</taxon>
        <taxon>Mammalia</taxon>
        <taxon>Eutheria</taxon>
        <taxon>Euarchontoglires</taxon>
        <taxon>Glires</taxon>
        <taxon>Lagomorpha</taxon>
        <taxon>Leporidae</taxon>
        <taxon>Oryctolagus</taxon>
    </lineage>
</organism>
<protein>
    <recommendedName>
        <fullName evidence="4">Katanin p60 ATPase-containing subunit A-like 1</fullName>
        <shortName evidence="4">Katanin p60 subunit A-like 1</shortName>
        <ecNumber evidence="4">5.6.1.1</ecNumber>
    </recommendedName>
    <alternativeName>
        <fullName evidence="4">p60 katanin-like 1</fullName>
    </alternativeName>
</protein>
<keyword id="KW-0007">Acetylation</keyword>
<keyword id="KW-0067">ATP-binding</keyword>
<keyword id="KW-0963">Cytoplasm</keyword>
<keyword id="KW-0206">Cytoskeleton</keyword>
<keyword id="KW-0413">Isomerase</keyword>
<keyword id="KW-0493">Microtubule</keyword>
<keyword id="KW-0547">Nucleotide-binding</keyword>
<keyword id="KW-0597">Phosphoprotein</keyword>
<keyword id="KW-1185">Reference proteome</keyword>
<dbReference type="EC" id="5.6.1.1" evidence="4"/>
<dbReference type="EMBL" id="DP001022">
    <property type="protein sequence ID" value="ACJ72829.1"/>
    <property type="molecule type" value="Genomic_DNA"/>
</dbReference>
<dbReference type="RefSeq" id="NP_001164961.1">
    <property type="nucleotide sequence ID" value="NM_001171490.1"/>
</dbReference>
<dbReference type="RefSeq" id="XP_008271739.1">
    <property type="nucleotide sequence ID" value="XM_008273517.2"/>
</dbReference>
<dbReference type="RefSeq" id="XP_008271740.1">
    <property type="nucleotide sequence ID" value="XM_008273518.2"/>
</dbReference>
<dbReference type="RefSeq" id="XP_008271741.1">
    <property type="nucleotide sequence ID" value="XM_008273519.2"/>
</dbReference>
<dbReference type="SMR" id="B7NZ88"/>
<dbReference type="FunCoup" id="B7NZ88">
    <property type="interactions" value="639"/>
</dbReference>
<dbReference type="STRING" id="9986.ENSOCUP00000002938"/>
<dbReference type="PaxDb" id="9986-ENSOCUP00000002938"/>
<dbReference type="Ensembl" id="ENSOCUT00000046530.1">
    <property type="protein sequence ID" value="ENSOCUP00000027774.1"/>
    <property type="gene ID" value="ENSOCUG00000003387.4"/>
</dbReference>
<dbReference type="GeneID" id="100328900"/>
<dbReference type="KEGG" id="ocu:100328900"/>
<dbReference type="CTD" id="84056"/>
<dbReference type="eggNOG" id="KOG0738">
    <property type="taxonomic scope" value="Eukaryota"/>
</dbReference>
<dbReference type="GeneTree" id="ENSGT00940000156630"/>
<dbReference type="HOGENOM" id="CLU_000688_21_1_1"/>
<dbReference type="InParanoid" id="B7NZ88"/>
<dbReference type="OMA" id="KGRWQQV"/>
<dbReference type="OrthoDB" id="5334845at2759"/>
<dbReference type="Proteomes" id="UP000001811">
    <property type="component" value="Unplaced"/>
</dbReference>
<dbReference type="Bgee" id="ENSOCUG00000003387">
    <property type="expression patterns" value="Expressed in testis and 15 other cell types or tissues"/>
</dbReference>
<dbReference type="GO" id="GO:0005813">
    <property type="term" value="C:centrosome"/>
    <property type="evidence" value="ECO:0007669"/>
    <property type="project" value="UniProtKB-UniRule"/>
</dbReference>
<dbReference type="GO" id="GO:0005737">
    <property type="term" value="C:cytoplasm"/>
    <property type="evidence" value="ECO:0000250"/>
    <property type="project" value="UniProtKB"/>
</dbReference>
<dbReference type="GO" id="GO:0005874">
    <property type="term" value="C:microtubule"/>
    <property type="evidence" value="ECO:0000250"/>
    <property type="project" value="UniProtKB"/>
</dbReference>
<dbReference type="GO" id="GO:0005819">
    <property type="term" value="C:spindle"/>
    <property type="evidence" value="ECO:0000250"/>
    <property type="project" value="UniProtKB"/>
</dbReference>
<dbReference type="GO" id="GO:0000922">
    <property type="term" value="C:spindle pole"/>
    <property type="evidence" value="ECO:0000250"/>
    <property type="project" value="UniProtKB"/>
</dbReference>
<dbReference type="GO" id="GO:0005524">
    <property type="term" value="F:ATP binding"/>
    <property type="evidence" value="ECO:0007669"/>
    <property type="project" value="UniProtKB-KW"/>
</dbReference>
<dbReference type="GO" id="GO:0016887">
    <property type="term" value="F:ATP hydrolysis activity"/>
    <property type="evidence" value="ECO:0007669"/>
    <property type="project" value="InterPro"/>
</dbReference>
<dbReference type="GO" id="GO:0008017">
    <property type="term" value="F:microtubule binding"/>
    <property type="evidence" value="ECO:0007669"/>
    <property type="project" value="UniProtKB-UniRule"/>
</dbReference>
<dbReference type="GO" id="GO:0008568">
    <property type="term" value="F:microtubule severing ATPase activity"/>
    <property type="evidence" value="ECO:0000250"/>
    <property type="project" value="UniProtKB"/>
</dbReference>
<dbReference type="GO" id="GO:0051013">
    <property type="term" value="P:microtubule severing"/>
    <property type="evidence" value="ECO:0000250"/>
    <property type="project" value="UniProtKB"/>
</dbReference>
<dbReference type="GO" id="GO:0007283">
    <property type="term" value="P:spermatogenesis"/>
    <property type="evidence" value="ECO:0007669"/>
    <property type="project" value="UniProtKB-UniRule"/>
</dbReference>
<dbReference type="CDD" id="cd21748">
    <property type="entry name" value="Kp60-NTD"/>
    <property type="match status" value="1"/>
</dbReference>
<dbReference type="CDD" id="cd19522">
    <property type="entry name" value="RecA-like_KTNA1"/>
    <property type="match status" value="1"/>
</dbReference>
<dbReference type="FunFam" id="1.10.8.60:FF:000025">
    <property type="entry name" value="Katanin p60 ATPase-containing subunit A1"/>
    <property type="match status" value="1"/>
</dbReference>
<dbReference type="FunFam" id="1.20.58.80:FF:000003">
    <property type="entry name" value="Katanin p60 ATPase-containing subunit A1"/>
    <property type="match status" value="1"/>
</dbReference>
<dbReference type="FunFam" id="3.40.50.300:FF:000159">
    <property type="entry name" value="Katanin p60 ATPase-containing subunit A1"/>
    <property type="match status" value="1"/>
</dbReference>
<dbReference type="Gene3D" id="1.10.8.60">
    <property type="match status" value="1"/>
</dbReference>
<dbReference type="Gene3D" id="3.40.50.300">
    <property type="entry name" value="P-loop containing nucleotide triphosphate hydrolases"/>
    <property type="match status" value="1"/>
</dbReference>
<dbReference type="Gene3D" id="1.20.58.80">
    <property type="entry name" value="Phosphotransferase system, lactose/cellobiose-type IIA subunit"/>
    <property type="match status" value="1"/>
</dbReference>
<dbReference type="HAMAP" id="MF_03023">
    <property type="entry name" value="Katanin_p60_A1"/>
    <property type="match status" value="1"/>
</dbReference>
<dbReference type="HAMAP" id="MF_03024">
    <property type="entry name" value="Katanin_p60_AL1"/>
    <property type="match status" value="1"/>
</dbReference>
<dbReference type="InterPro" id="IPR003593">
    <property type="entry name" value="AAA+_ATPase"/>
</dbReference>
<dbReference type="InterPro" id="IPR041569">
    <property type="entry name" value="AAA_lid_3"/>
</dbReference>
<dbReference type="InterPro" id="IPR003959">
    <property type="entry name" value="ATPase_AAA_core"/>
</dbReference>
<dbReference type="InterPro" id="IPR003960">
    <property type="entry name" value="ATPase_AAA_CS"/>
</dbReference>
<dbReference type="InterPro" id="IPR028596">
    <property type="entry name" value="KATNA1"/>
</dbReference>
<dbReference type="InterPro" id="IPR048611">
    <property type="entry name" value="KATNA1_MIT"/>
</dbReference>
<dbReference type="InterPro" id="IPR028594">
    <property type="entry name" value="Katnal1_chordates"/>
</dbReference>
<dbReference type="InterPro" id="IPR048612">
    <property type="entry name" value="KTNA1_AAA_dom"/>
</dbReference>
<dbReference type="InterPro" id="IPR050304">
    <property type="entry name" value="MT-severing_AAA_ATPase"/>
</dbReference>
<dbReference type="InterPro" id="IPR027417">
    <property type="entry name" value="P-loop_NTPase"/>
</dbReference>
<dbReference type="InterPro" id="IPR015415">
    <property type="entry name" value="Spast_Vps4_C"/>
</dbReference>
<dbReference type="PANTHER" id="PTHR23074">
    <property type="entry name" value="AAA DOMAIN-CONTAINING"/>
    <property type="match status" value="1"/>
</dbReference>
<dbReference type="PANTHER" id="PTHR23074:SF65">
    <property type="entry name" value="KATANIN P60 ATPASE-CONTAINING SUBUNIT A-LIKE 1"/>
    <property type="match status" value="1"/>
</dbReference>
<dbReference type="Pfam" id="PF00004">
    <property type="entry name" value="AAA"/>
    <property type="match status" value="1"/>
</dbReference>
<dbReference type="Pfam" id="PF17862">
    <property type="entry name" value="AAA_lid_3"/>
    <property type="match status" value="1"/>
</dbReference>
<dbReference type="Pfam" id="PF21126">
    <property type="entry name" value="KATNA1_MIT"/>
    <property type="match status" value="1"/>
</dbReference>
<dbReference type="Pfam" id="PF09336">
    <property type="entry name" value="Vps4_C"/>
    <property type="match status" value="1"/>
</dbReference>
<dbReference type="SMART" id="SM00382">
    <property type="entry name" value="AAA"/>
    <property type="match status" value="1"/>
</dbReference>
<dbReference type="SUPFAM" id="SSF52540">
    <property type="entry name" value="P-loop containing nucleoside triphosphate hydrolases"/>
    <property type="match status" value="1"/>
</dbReference>
<dbReference type="PROSITE" id="PS00674">
    <property type="entry name" value="AAA"/>
    <property type="match status" value="1"/>
</dbReference>
<feature type="chain" id="PRO_0000367125" description="Katanin p60 ATPase-containing subunit A-like 1">
    <location>
        <begin position="1"/>
        <end position="490"/>
    </location>
</feature>
<feature type="region of interest" description="Disordered" evidence="5">
    <location>
        <begin position="96"/>
        <end position="182"/>
    </location>
</feature>
<feature type="compositionally biased region" description="Basic and acidic residues" evidence="5">
    <location>
        <begin position="116"/>
        <end position="127"/>
    </location>
</feature>
<feature type="compositionally biased region" description="Low complexity" evidence="5">
    <location>
        <begin position="128"/>
        <end position="139"/>
    </location>
</feature>
<feature type="compositionally biased region" description="Basic and acidic residues" evidence="5">
    <location>
        <begin position="143"/>
        <end position="169"/>
    </location>
</feature>
<feature type="binding site" evidence="4">
    <location>
        <begin position="248"/>
        <end position="255"/>
    </location>
    <ligand>
        <name>ATP</name>
        <dbReference type="ChEBI" id="CHEBI:30616"/>
    </ligand>
</feature>
<feature type="modified residue" description="N-acetylmethionine" evidence="3">
    <location>
        <position position="1"/>
    </location>
</feature>
<feature type="modified residue" description="Phosphoserine" evidence="1">
    <location>
        <position position="174"/>
    </location>
</feature>
<accession>B7NZ88</accession>
<name>KATL1_RABIT</name>
<proteinExistence type="inferred from homology"/>
<evidence type="ECO:0000250" key="1">
    <source>
        <dbReference type="UniProtKB" id="Q5XIK7"/>
    </source>
</evidence>
<evidence type="ECO:0000250" key="2">
    <source>
        <dbReference type="UniProtKB" id="Q8K0T4"/>
    </source>
</evidence>
<evidence type="ECO:0000250" key="3">
    <source>
        <dbReference type="UniProtKB" id="Q9BW62"/>
    </source>
</evidence>
<evidence type="ECO:0000255" key="4">
    <source>
        <dbReference type="HAMAP-Rule" id="MF_03024"/>
    </source>
</evidence>
<evidence type="ECO:0000256" key="5">
    <source>
        <dbReference type="SAM" id="MobiDB-lite"/>
    </source>
</evidence>
<sequence>MNLAEICDNAKKGREYALLGNYDSSMVYYQGVIQQIQRHCQSIRDPAVKGKWQQVRQELLEEYEQVKSIVSTLESFKIEKPPDFPVSCQDEPFRDPAVWPPPVPAEHRAPPQIRRPNREVRPLRKEMAGVGARGPVGRAHPISKSEKPSASRDKDCRARGRDDKGRKNMQDGASDGEIPKFDGAGYDKDLVEALERDIVSRNPSIHWDDIADLEEAKKLLREAVVLPMWMPDFFKGIRRPWKGVLMVGPPGTGKTMLAKAVATECGTTFFNVSSSTLTSKYRGESEKLVRLLFEMARFYAPTTIFIDEIDSICSRRGTSDEHEASRRVKSELLVQMDGVGGALENDDPSKMVMVLAATNFPWDIDEALRRRLEKRIYIPLPTAKGRAELLKISLREVELDPDIRLEDIAEKIEGYSGADITNVCRDASLMAMRRRINGLSPEEIRALSKEELQMPVTRGDFELALKKIAKSVSAADLEKYEKWMVEFGSA</sequence>
<gene>
    <name evidence="4" type="primary">KATNAL1</name>
</gene>
<comment type="function">
    <text evidence="2 3">Regulates microtubule dynamics in Sertoli cells, a process that is essential for spermiogenesis and male fertility. Severs microtubules in an ATP-dependent manner, promoting rapid reorganization of cellular microtubule arrays (By similarity). Has microtubule-severing activity in vitro (By similarity).</text>
</comment>
<comment type="catalytic activity">
    <reaction evidence="4">
        <text>n ATP + n H2O + a microtubule = n ADP + n phosphate + (n+1) alpha/beta tubulin heterodimers.</text>
        <dbReference type="EC" id="5.6.1.1"/>
    </reaction>
</comment>
<comment type="subunit">
    <text evidence="3">Interacts with KATNB1 and KATNBL1.</text>
</comment>
<comment type="subcellular location">
    <subcellularLocation>
        <location evidence="4">Cytoplasm</location>
        <location evidence="4">Cytoskeleton</location>
    </subcellularLocation>
    <subcellularLocation>
        <location evidence="3">Cytoplasm</location>
    </subcellularLocation>
    <subcellularLocation>
        <location evidence="3">Cytoplasm</location>
        <location evidence="3">Cytoskeleton</location>
        <location evidence="3">Spindle pole</location>
    </subcellularLocation>
    <subcellularLocation>
        <location evidence="3">Cytoplasm</location>
        <location evidence="3">Cytoskeleton</location>
        <location evidence="3">Spindle</location>
    </subcellularLocation>
    <text evidence="2 3">Colocalizes with microtubules throughout the basal and adluminal compartments of Sertoli cells (By similarity). Localizes within the cytoplasm, partially overlapping with microtubules, in interphase and to the mitotic spindle and spindle poles during mitosis (By similarity).</text>
</comment>
<comment type="similarity">
    <text evidence="4">Belongs to the AAA ATPase family. Katanin p60 subunit A1 subfamily. A-like 1 sub-subfamily.</text>
</comment>